<keyword id="KW-0007">Acetylation</keyword>
<keyword id="KW-0963">Cytoplasm</keyword>
<keyword id="KW-0520">NAD</keyword>
<keyword id="KW-0560">Oxidoreductase</keyword>
<keyword id="KW-1185">Reference proteome</keyword>
<sequence length="494" mass="53941">MSTGTFIVSQPLNYRGGARVDPVDASGTEKAFEPATGRVIATFTCSGEKEVNLAVQDAKAAFKIWSQKSGMERCRILLEAARIIRERKEEIATMETINNGKSIFEARLDVDISWQCLEYYAGLAGSMAGEHIQLPGGSFGYTRREPLGVCVGIGAWNYPFQIACWKSAPALACGNAMIFKPSPFTPLSVLLLAEIYTEAGVPPGLFNVVQGGATTGQLLCQHRDVAKISFTGSVPTGSKIMEMSAKGIKPVTLELGGKSPLIIFSDCDMGNAVKGALMANFLTQGEVCCNGTRVFVQKEILDKFTEEVVKQTQRIKIGDPLLEDTRMGPLINRPHLERILGFVKVAKEQGAKVLCGGDLYVPEDPKLKEGYYMRPCVLTNCRDDMTCVKEEIFGPVMSILSFDTEAEVVERANDTTFGLAAGVFTRDIQRAHRVVAELQAGMCFINNYNVSPVELPFGGYKKSGFGRENGRVTIEYYSQLKTVCVEMGDVESVF</sequence>
<comment type="function">
    <text evidence="1">Converts gamma-trimethylaminobutyraldehyde into gamma-butyrobetaine with high efficiency (in vitro). Can catalyze the irreversible oxidation of a broad range of aldehydes to the corresponding acids in an NAD-dependent reaction, but with low efficiency. Catalyzes the oxidation of aldehydes arising from biogenic amines and polyamines.</text>
</comment>
<comment type="catalytic activity">
    <reaction evidence="1">
        <text>4-(trimethylamino)butanal + NAD(+) + H2O = 4-(trimethylamino)butanoate + NADH + 2 H(+)</text>
        <dbReference type="Rhea" id="RHEA:17985"/>
        <dbReference type="ChEBI" id="CHEBI:15377"/>
        <dbReference type="ChEBI" id="CHEBI:15378"/>
        <dbReference type="ChEBI" id="CHEBI:16244"/>
        <dbReference type="ChEBI" id="CHEBI:18020"/>
        <dbReference type="ChEBI" id="CHEBI:57540"/>
        <dbReference type="ChEBI" id="CHEBI:57945"/>
        <dbReference type="EC" id="1.2.1.47"/>
    </reaction>
</comment>
<comment type="catalytic activity">
    <reaction evidence="1">
        <text>an aldehyde + NAD(+) + H2O = a carboxylate + NADH + 2 H(+)</text>
        <dbReference type="Rhea" id="RHEA:16185"/>
        <dbReference type="ChEBI" id="CHEBI:15377"/>
        <dbReference type="ChEBI" id="CHEBI:15378"/>
        <dbReference type="ChEBI" id="CHEBI:17478"/>
        <dbReference type="ChEBI" id="CHEBI:29067"/>
        <dbReference type="ChEBI" id="CHEBI:57540"/>
        <dbReference type="ChEBI" id="CHEBI:57945"/>
        <dbReference type="EC" id="1.2.1.3"/>
    </reaction>
</comment>
<comment type="catalytic activity">
    <reaction evidence="1">
        <text>4-aminobutanal + NAD(+) + H2O = 4-aminobutanoate + NADH + 2 H(+)</text>
        <dbReference type="Rhea" id="RHEA:19105"/>
        <dbReference type="ChEBI" id="CHEBI:15377"/>
        <dbReference type="ChEBI" id="CHEBI:15378"/>
        <dbReference type="ChEBI" id="CHEBI:57540"/>
        <dbReference type="ChEBI" id="CHEBI:57945"/>
        <dbReference type="ChEBI" id="CHEBI:58264"/>
        <dbReference type="ChEBI" id="CHEBI:59888"/>
        <dbReference type="EC" id="1.2.1.19"/>
    </reaction>
</comment>
<comment type="catalytic activity">
    <reaction evidence="1">
        <text>formaldehyde + NAD(+) + H2O = formate + NADH + 2 H(+)</text>
        <dbReference type="Rhea" id="RHEA:16425"/>
        <dbReference type="ChEBI" id="CHEBI:15377"/>
        <dbReference type="ChEBI" id="CHEBI:15378"/>
        <dbReference type="ChEBI" id="CHEBI:15740"/>
        <dbReference type="ChEBI" id="CHEBI:16842"/>
        <dbReference type="ChEBI" id="CHEBI:57540"/>
        <dbReference type="ChEBI" id="CHEBI:57945"/>
        <dbReference type="EC" id="1.2.1.46"/>
    </reaction>
</comment>
<comment type="catalytic activity">
    <reaction evidence="1">
        <text>acetaldehyde + NAD(+) + H2O = acetate + NADH + 2 H(+)</text>
        <dbReference type="Rhea" id="RHEA:25294"/>
        <dbReference type="ChEBI" id="CHEBI:15343"/>
        <dbReference type="ChEBI" id="CHEBI:15377"/>
        <dbReference type="ChEBI" id="CHEBI:15378"/>
        <dbReference type="ChEBI" id="CHEBI:30089"/>
        <dbReference type="ChEBI" id="CHEBI:57540"/>
        <dbReference type="ChEBI" id="CHEBI:57945"/>
        <dbReference type="EC" id="1.2.1.3"/>
    </reaction>
</comment>
<comment type="catalytic activity">
    <reaction evidence="1">
        <text>imidazole-4-acetaldehyde + NAD(+) + H2O = imidazole-4-acetate + NADH + 2 H(+)</text>
        <dbReference type="Rhea" id="RHEA:31059"/>
        <dbReference type="ChEBI" id="CHEBI:15377"/>
        <dbReference type="ChEBI" id="CHEBI:15378"/>
        <dbReference type="ChEBI" id="CHEBI:27398"/>
        <dbReference type="ChEBI" id="CHEBI:57540"/>
        <dbReference type="ChEBI" id="CHEBI:57945"/>
        <dbReference type="ChEBI" id="CHEBI:57969"/>
    </reaction>
</comment>
<comment type="catalytic activity">
    <reaction evidence="1">
        <text>acrolein + NAD(+) + H2O = acrylate + NADH + 2 H(+)</text>
        <dbReference type="Rhea" id="RHEA:69084"/>
        <dbReference type="ChEBI" id="CHEBI:15368"/>
        <dbReference type="ChEBI" id="CHEBI:15377"/>
        <dbReference type="ChEBI" id="CHEBI:15378"/>
        <dbReference type="ChEBI" id="CHEBI:37080"/>
        <dbReference type="ChEBI" id="CHEBI:57540"/>
        <dbReference type="ChEBI" id="CHEBI:57945"/>
    </reaction>
</comment>
<comment type="catalytic activity">
    <reaction evidence="1">
        <text>(5-hydroxyindol-3-yl)acetaldehyde + NAD(+) + H2O = (5-hydroxyindol-3-yl)acetate + NADH + 2 H(+)</text>
        <dbReference type="Rhea" id="RHEA:31215"/>
        <dbReference type="ChEBI" id="CHEBI:15377"/>
        <dbReference type="ChEBI" id="CHEBI:15378"/>
        <dbReference type="ChEBI" id="CHEBI:50157"/>
        <dbReference type="ChEBI" id="CHEBI:57540"/>
        <dbReference type="ChEBI" id="CHEBI:57945"/>
        <dbReference type="ChEBI" id="CHEBI:62622"/>
    </reaction>
</comment>
<comment type="catalytic activity">
    <reaction evidence="1">
        <text>3,4-dihydroxyphenylacetaldehyde + NAD(+) + H2O = 3,4-dihydroxyphenylacetate + NADH + 2 H(+)</text>
        <dbReference type="Rhea" id="RHEA:69080"/>
        <dbReference type="ChEBI" id="CHEBI:15377"/>
        <dbReference type="ChEBI" id="CHEBI:15378"/>
        <dbReference type="ChEBI" id="CHEBI:17612"/>
        <dbReference type="ChEBI" id="CHEBI:27978"/>
        <dbReference type="ChEBI" id="CHEBI:57540"/>
        <dbReference type="ChEBI" id="CHEBI:57945"/>
    </reaction>
</comment>
<comment type="catalytic activity">
    <reaction evidence="1">
        <text>spermine monoaldehyde + NAD(+) + H2O = N-(2-carboxyethyl)spermidine + NADH + 2 H(+)</text>
        <dbReference type="Rhea" id="RHEA:69168"/>
        <dbReference type="ChEBI" id="CHEBI:15377"/>
        <dbReference type="ChEBI" id="CHEBI:15378"/>
        <dbReference type="ChEBI" id="CHEBI:57540"/>
        <dbReference type="ChEBI" id="CHEBI:57945"/>
        <dbReference type="ChEBI" id="CHEBI:180903"/>
        <dbReference type="ChEBI" id="CHEBI:180913"/>
    </reaction>
</comment>
<comment type="catalytic activity">
    <reaction evidence="1">
        <text>propanal + NAD(+) + H2O = propanoate + NADH + 2 H(+)</text>
        <dbReference type="Rhea" id="RHEA:67256"/>
        <dbReference type="ChEBI" id="CHEBI:15377"/>
        <dbReference type="ChEBI" id="CHEBI:15378"/>
        <dbReference type="ChEBI" id="CHEBI:17153"/>
        <dbReference type="ChEBI" id="CHEBI:17272"/>
        <dbReference type="ChEBI" id="CHEBI:57540"/>
        <dbReference type="ChEBI" id="CHEBI:57945"/>
    </reaction>
</comment>
<comment type="catalytic activity">
    <reaction evidence="1">
        <text>butanal + NAD(+) + H2O = butanoate + NADH + 2 H(+)</text>
        <dbReference type="Rhea" id="RHEA:69088"/>
        <dbReference type="ChEBI" id="CHEBI:15377"/>
        <dbReference type="ChEBI" id="CHEBI:15378"/>
        <dbReference type="ChEBI" id="CHEBI:15743"/>
        <dbReference type="ChEBI" id="CHEBI:17968"/>
        <dbReference type="ChEBI" id="CHEBI:57540"/>
        <dbReference type="ChEBI" id="CHEBI:57945"/>
    </reaction>
</comment>
<comment type="catalytic activity">
    <reaction evidence="1">
        <text>pentanal + NAD(+) + H2O = pentanoate + NADH + 2 H(+)</text>
        <dbReference type="Rhea" id="RHEA:69092"/>
        <dbReference type="ChEBI" id="CHEBI:15377"/>
        <dbReference type="ChEBI" id="CHEBI:15378"/>
        <dbReference type="ChEBI" id="CHEBI:31011"/>
        <dbReference type="ChEBI" id="CHEBI:57540"/>
        <dbReference type="ChEBI" id="CHEBI:57945"/>
        <dbReference type="ChEBI" id="CHEBI:84069"/>
    </reaction>
</comment>
<comment type="catalytic activity">
    <reaction evidence="1">
        <text>hexanal + NAD(+) + H2O = hexanoate + NADH + 2 H(+)</text>
        <dbReference type="Rhea" id="RHEA:67276"/>
        <dbReference type="ChEBI" id="CHEBI:15377"/>
        <dbReference type="ChEBI" id="CHEBI:15378"/>
        <dbReference type="ChEBI" id="CHEBI:17120"/>
        <dbReference type="ChEBI" id="CHEBI:57540"/>
        <dbReference type="ChEBI" id="CHEBI:57945"/>
        <dbReference type="ChEBI" id="CHEBI:88528"/>
    </reaction>
</comment>
<comment type="pathway">
    <text evidence="1">Amine and polyamine biosynthesis; carnitine biosynthesis.</text>
</comment>
<comment type="subunit">
    <text evidence="1">Homotetramer.</text>
</comment>
<comment type="subcellular location">
    <subcellularLocation>
        <location evidence="4">Cytoplasm</location>
        <location evidence="4">Cytosol</location>
    </subcellularLocation>
    <subcellularLocation>
        <location evidence="1">Cytoplasm</location>
    </subcellularLocation>
</comment>
<comment type="similarity">
    <text evidence="7">Belongs to the aldehyde dehydrogenase family.</text>
</comment>
<dbReference type="EC" id="1.2.1.47" evidence="1"/>
<dbReference type="EC" id="1.2.1.3" evidence="1"/>
<dbReference type="EC" id="1.2.1.46" evidence="1"/>
<dbReference type="EC" id="1.2.1.19" evidence="1"/>
<dbReference type="EMBL" id="AEMK02000022">
    <property type="status" value="NOT_ANNOTATED_CDS"/>
    <property type="molecule type" value="Genomic_DNA"/>
</dbReference>
<dbReference type="EMBL" id="F14819">
    <property type="protein sequence ID" value="CAA23277.1"/>
    <property type="molecule type" value="mRNA"/>
</dbReference>
<dbReference type="SMR" id="Q29228"/>
<dbReference type="FunCoup" id="Q29228">
    <property type="interactions" value="793"/>
</dbReference>
<dbReference type="STRING" id="9823.ENSSSCP00000006743"/>
<dbReference type="PaxDb" id="9823-ENSSSCP00000006743"/>
<dbReference type="PeptideAtlas" id="Q29228"/>
<dbReference type="Ensembl" id="ENSSSCT00000062442.2">
    <property type="protein sequence ID" value="ENSSSCP00000033148.1"/>
    <property type="gene ID" value="ENSSSCG00000006324.5"/>
</dbReference>
<dbReference type="Ensembl" id="ENSSSCT00025041829.1">
    <property type="protein sequence ID" value="ENSSSCP00025017804.1"/>
    <property type="gene ID" value="ENSSSCG00025030737.1"/>
</dbReference>
<dbReference type="Ensembl" id="ENSSSCT00035052649.1">
    <property type="protein sequence ID" value="ENSSSCP00035021175.1"/>
    <property type="gene ID" value="ENSSSCG00035039640.1"/>
</dbReference>
<dbReference type="Ensembl" id="ENSSSCT00040054143.1">
    <property type="protein sequence ID" value="ENSSSCP00040022537.1"/>
    <property type="gene ID" value="ENSSSCG00040040317.1"/>
</dbReference>
<dbReference type="Ensembl" id="ENSSSCT00045043382.1">
    <property type="protein sequence ID" value="ENSSSCP00045030152.1"/>
    <property type="gene ID" value="ENSSSCG00045025328.1"/>
</dbReference>
<dbReference type="Ensembl" id="ENSSSCT00050067971.1">
    <property type="protein sequence ID" value="ENSSSCP00050029148.1"/>
    <property type="gene ID" value="ENSSSCG00050049960.1"/>
</dbReference>
<dbReference type="Ensembl" id="ENSSSCT00055016858.1">
    <property type="protein sequence ID" value="ENSSSCP00055013302.1"/>
    <property type="gene ID" value="ENSSSCG00055008579.1"/>
</dbReference>
<dbReference type="Ensembl" id="ENSSSCT00060094541.1">
    <property type="protein sequence ID" value="ENSSSCP00060040884.1"/>
    <property type="gene ID" value="ENSSSCG00060069250.1"/>
</dbReference>
<dbReference type="Ensembl" id="ENSSSCT00065072386.1">
    <property type="protein sequence ID" value="ENSSSCP00065031530.1"/>
    <property type="gene ID" value="ENSSSCG00065052868.1"/>
</dbReference>
<dbReference type="Ensembl" id="ENSSSCT00070049160.1">
    <property type="protein sequence ID" value="ENSSSCP00070041517.1"/>
    <property type="gene ID" value="ENSSSCG00070024633.1"/>
</dbReference>
<dbReference type="VGNC" id="VGNC:109625">
    <property type="gene designation" value="ALDH9A1"/>
</dbReference>
<dbReference type="eggNOG" id="KOG2450">
    <property type="taxonomic scope" value="Eukaryota"/>
</dbReference>
<dbReference type="GeneTree" id="ENSGT00940000162687"/>
<dbReference type="InParanoid" id="Q29228"/>
<dbReference type="OMA" id="WTRMLVH"/>
<dbReference type="Reactome" id="R-SSC-71262">
    <property type="pathway name" value="Carnitine synthesis"/>
</dbReference>
<dbReference type="UniPathway" id="UPA00118"/>
<dbReference type="Proteomes" id="UP000008227">
    <property type="component" value="Chromosome 4"/>
</dbReference>
<dbReference type="Proteomes" id="UP000314985">
    <property type="component" value="Chromosome 4"/>
</dbReference>
<dbReference type="Proteomes" id="UP000694570">
    <property type="component" value="Unplaced"/>
</dbReference>
<dbReference type="Proteomes" id="UP000694571">
    <property type="component" value="Unplaced"/>
</dbReference>
<dbReference type="Proteomes" id="UP000694720">
    <property type="component" value="Unplaced"/>
</dbReference>
<dbReference type="Proteomes" id="UP000694722">
    <property type="component" value="Unplaced"/>
</dbReference>
<dbReference type="Proteomes" id="UP000694723">
    <property type="component" value="Unplaced"/>
</dbReference>
<dbReference type="Proteomes" id="UP000694724">
    <property type="component" value="Unplaced"/>
</dbReference>
<dbReference type="Proteomes" id="UP000694725">
    <property type="component" value="Unplaced"/>
</dbReference>
<dbReference type="Proteomes" id="UP000694726">
    <property type="component" value="Unplaced"/>
</dbReference>
<dbReference type="Proteomes" id="UP000694727">
    <property type="component" value="Unplaced"/>
</dbReference>
<dbReference type="Proteomes" id="UP000694728">
    <property type="component" value="Unplaced"/>
</dbReference>
<dbReference type="Bgee" id="ENSSSCG00000006324">
    <property type="expression patterns" value="Expressed in oocyte and 44 other cell types or tissues"/>
</dbReference>
<dbReference type="ExpressionAtlas" id="Q29228">
    <property type="expression patterns" value="baseline and differential"/>
</dbReference>
<dbReference type="GO" id="GO:0005737">
    <property type="term" value="C:cytoplasm"/>
    <property type="evidence" value="ECO:0000250"/>
    <property type="project" value="UniProtKB"/>
</dbReference>
<dbReference type="GO" id="GO:0005829">
    <property type="term" value="C:cytosol"/>
    <property type="evidence" value="ECO:0007669"/>
    <property type="project" value="UniProtKB-SubCell"/>
</dbReference>
<dbReference type="GO" id="GO:0047105">
    <property type="term" value="F:4-trimethylammoniobutyraldehyde dehydrogenase activity"/>
    <property type="evidence" value="ECO:0000250"/>
    <property type="project" value="UniProtKB"/>
</dbReference>
<dbReference type="GO" id="GO:0140087">
    <property type="term" value="F:acetaldehyde dehydrogenase (NAD+) activity"/>
    <property type="evidence" value="ECO:0007669"/>
    <property type="project" value="RHEA"/>
</dbReference>
<dbReference type="GO" id="GO:0004029">
    <property type="term" value="F:aldehyde dehydrogenase (NAD+) activity"/>
    <property type="evidence" value="ECO:0000250"/>
    <property type="project" value="UniProtKB"/>
</dbReference>
<dbReference type="GO" id="GO:0019145">
    <property type="term" value="F:aminobutyraldehyde dehydrogenase (NAD+) activity"/>
    <property type="evidence" value="ECO:0000250"/>
    <property type="project" value="UniProtKB"/>
</dbReference>
<dbReference type="GO" id="GO:0018467">
    <property type="term" value="F:formaldehyde dehydrogenase (NAD+) activity"/>
    <property type="evidence" value="ECO:0000250"/>
    <property type="project" value="UniProtKB"/>
</dbReference>
<dbReference type="GO" id="GO:0006081">
    <property type="term" value="P:aldehyde metabolic process"/>
    <property type="evidence" value="ECO:0000250"/>
    <property type="project" value="UniProtKB"/>
</dbReference>
<dbReference type="GO" id="GO:0045329">
    <property type="term" value="P:carnitine biosynthetic process"/>
    <property type="evidence" value="ECO:0007669"/>
    <property type="project" value="UniProtKB-UniPathway"/>
</dbReference>
<dbReference type="GO" id="GO:0051289">
    <property type="term" value="P:protein homotetramerization"/>
    <property type="evidence" value="ECO:0000250"/>
    <property type="project" value="UniProtKB"/>
</dbReference>
<dbReference type="CDD" id="cd07090">
    <property type="entry name" value="ALDH_F9_TMBADH"/>
    <property type="match status" value="1"/>
</dbReference>
<dbReference type="FunFam" id="3.40.309.10:FF:000019">
    <property type="entry name" value="4-trimethylaminobutyraldehyde dehydrogenase isoform X1"/>
    <property type="match status" value="1"/>
</dbReference>
<dbReference type="FunFam" id="3.40.605.10:FF:000016">
    <property type="entry name" value="4-trimethylaminobutyraldehyde dehydrogenase isoform X1"/>
    <property type="match status" value="1"/>
</dbReference>
<dbReference type="Gene3D" id="3.40.605.10">
    <property type="entry name" value="Aldehyde Dehydrogenase, Chain A, domain 1"/>
    <property type="match status" value="1"/>
</dbReference>
<dbReference type="Gene3D" id="3.40.309.10">
    <property type="entry name" value="Aldehyde Dehydrogenase, Chain A, domain 2"/>
    <property type="match status" value="1"/>
</dbReference>
<dbReference type="InterPro" id="IPR016161">
    <property type="entry name" value="Ald_DH/histidinol_DH"/>
</dbReference>
<dbReference type="InterPro" id="IPR016163">
    <property type="entry name" value="Ald_DH_C"/>
</dbReference>
<dbReference type="InterPro" id="IPR016160">
    <property type="entry name" value="Ald_DH_CS_CYS"/>
</dbReference>
<dbReference type="InterPro" id="IPR029510">
    <property type="entry name" value="Ald_DH_CS_GLU"/>
</dbReference>
<dbReference type="InterPro" id="IPR016162">
    <property type="entry name" value="Ald_DH_N"/>
</dbReference>
<dbReference type="InterPro" id="IPR015590">
    <property type="entry name" value="Aldehyde_DH_dom"/>
</dbReference>
<dbReference type="NCBIfam" id="NF009725">
    <property type="entry name" value="PRK13252.1"/>
    <property type="match status" value="1"/>
</dbReference>
<dbReference type="PANTHER" id="PTHR11699">
    <property type="entry name" value="ALDEHYDE DEHYDROGENASE-RELATED"/>
    <property type="match status" value="1"/>
</dbReference>
<dbReference type="Pfam" id="PF00171">
    <property type="entry name" value="Aldedh"/>
    <property type="match status" value="1"/>
</dbReference>
<dbReference type="SUPFAM" id="SSF53720">
    <property type="entry name" value="ALDH-like"/>
    <property type="match status" value="1"/>
</dbReference>
<dbReference type="PROSITE" id="PS00070">
    <property type="entry name" value="ALDEHYDE_DEHYDR_CYS"/>
    <property type="match status" value="1"/>
</dbReference>
<dbReference type="PROSITE" id="PS00687">
    <property type="entry name" value="ALDEHYDE_DEHYDR_GLU"/>
    <property type="match status" value="1"/>
</dbReference>
<evidence type="ECO:0000250" key="1">
    <source>
        <dbReference type="UniProtKB" id="P49189"/>
    </source>
</evidence>
<evidence type="ECO:0000250" key="2">
    <source>
        <dbReference type="UniProtKB" id="P56533"/>
    </source>
</evidence>
<evidence type="ECO:0000250" key="3">
    <source>
        <dbReference type="UniProtKB" id="Q9JLJ2"/>
    </source>
</evidence>
<evidence type="ECO:0000250" key="4">
    <source>
        <dbReference type="UniProtKB" id="Q9JLJ3"/>
    </source>
</evidence>
<evidence type="ECO:0000255" key="5">
    <source>
        <dbReference type="PROSITE-ProRule" id="PRU10007"/>
    </source>
</evidence>
<evidence type="ECO:0000255" key="6">
    <source>
        <dbReference type="PROSITE-ProRule" id="PRU10008"/>
    </source>
</evidence>
<evidence type="ECO:0000305" key="7"/>
<organism>
    <name type="scientific">Sus scrofa</name>
    <name type="common">Pig</name>
    <dbReference type="NCBI Taxonomy" id="9823"/>
    <lineage>
        <taxon>Eukaryota</taxon>
        <taxon>Metazoa</taxon>
        <taxon>Chordata</taxon>
        <taxon>Craniata</taxon>
        <taxon>Vertebrata</taxon>
        <taxon>Euteleostomi</taxon>
        <taxon>Mammalia</taxon>
        <taxon>Eutheria</taxon>
        <taxon>Laurasiatheria</taxon>
        <taxon>Artiodactyla</taxon>
        <taxon>Suina</taxon>
        <taxon>Suidae</taxon>
        <taxon>Sus</taxon>
    </lineage>
</organism>
<reference key="1">
    <citation type="submission" date="2009-11" db="EMBL/GenBank/DDBJ databases">
        <authorList>
            <consortium name="Porcine genome sequencing project"/>
        </authorList>
    </citation>
    <scope>NUCLEOTIDE SEQUENCE [LARGE SCALE GENOMIC DNA]</scope>
    <source>
        <strain>Duroc</strain>
    </source>
</reference>
<reference key="2">
    <citation type="journal article" date="1996" name="Mamm. Genome">
        <title>Evaluation and characterization of a porcine small intestine cDNA library: analysis of 839 clones.</title>
        <authorList>
            <person name="Winteroe A.K."/>
            <person name="Fredholm M."/>
            <person name="Davies W."/>
        </authorList>
    </citation>
    <scope>NUCLEOTIDE SEQUENCE [LARGE SCALE MRNA] OF 33-101</scope>
    <source>
        <tissue>Small intestine</tissue>
    </source>
</reference>
<gene>
    <name type="primary">ALDH9A1</name>
    <name type="synonym">ALDH9</name>
</gene>
<proteinExistence type="evidence at transcript level"/>
<accession>Q29228</accession>
<accession>A0A286ZNV5</accession>
<protein>
    <recommendedName>
        <fullName>4-trimethylaminobutyraldehyde dehydrogenase</fullName>
        <shortName>TMABA-DH</shortName>
        <shortName>TMABADH</shortName>
        <ecNumber evidence="1">1.2.1.47</ecNumber>
    </recommendedName>
    <alternativeName>
        <fullName>Aldehyde dehydrogenase family 9 member A1</fullName>
        <ecNumber evidence="1">1.2.1.3</ecNumber>
    </alternativeName>
    <alternativeName>
        <fullName>Formaldehyde dehydrogenase</fullName>
        <ecNumber evidence="1">1.2.1.46</ecNumber>
    </alternativeName>
    <alternativeName>
        <fullName>Gamma-aminobutyraldehyde dehydrogenase</fullName>
        <ecNumber evidence="1">1.2.1.19</ecNumber>
    </alternativeName>
</protein>
<name>AL9A1_PIG</name>
<feature type="initiator methionine" description="Removed" evidence="1">
    <location>
        <position position="1"/>
    </location>
</feature>
<feature type="chain" id="PRO_0000056487" description="4-trimethylaminobutyraldehyde dehydrogenase">
    <location>
        <begin position="2"/>
        <end position="494"/>
    </location>
</feature>
<feature type="active site" description="Proton acceptor" evidence="5">
    <location>
        <position position="254"/>
    </location>
</feature>
<feature type="active site" description="Nucleophile" evidence="6">
    <location>
        <position position="288"/>
    </location>
</feature>
<feature type="binding site" evidence="2">
    <location>
        <position position="180"/>
    </location>
    <ligand>
        <name>NAD(+)</name>
        <dbReference type="ChEBI" id="CHEBI:57540"/>
    </ligand>
</feature>
<feature type="binding site" evidence="2">
    <location>
        <begin position="232"/>
        <end position="236"/>
    </location>
    <ligand>
        <name>NAD(+)</name>
        <dbReference type="ChEBI" id="CHEBI:57540"/>
    </ligand>
</feature>
<feature type="binding site" evidence="2">
    <location>
        <position position="391"/>
    </location>
    <ligand>
        <name>NAD(+)</name>
        <dbReference type="ChEBI" id="CHEBI:57540"/>
    </ligand>
</feature>
<feature type="modified residue" description="N-acetylserine" evidence="1">
    <location>
        <position position="2"/>
    </location>
</feature>
<feature type="modified residue" description="N6-acetyllysine; alternate" evidence="3">
    <location>
        <position position="30"/>
    </location>
</feature>
<feature type="modified residue" description="N6-succinyllysine; alternate" evidence="3">
    <location>
        <position position="30"/>
    </location>
</feature>
<feature type="modified residue" description="N6-succinyllysine" evidence="3">
    <location>
        <position position="59"/>
    </location>
</feature>
<feature type="modified residue" description="N6-acetyllysine" evidence="3">
    <location>
        <position position="298"/>
    </location>
</feature>
<feature type="modified residue" description="N6-acetyllysine; alternate" evidence="3">
    <location>
        <position position="303"/>
    </location>
</feature>
<feature type="modified residue" description="N6-succinyllysine; alternate" evidence="3">
    <location>
        <position position="303"/>
    </location>
</feature>
<feature type="modified residue" description="N6-acetyllysine" evidence="3">
    <location>
        <position position="344"/>
    </location>
</feature>
<feature type="sequence conflict" description="In Ref. 2; CAA23277." evidence="7" ref="2">
    <original>F</original>
    <variation>L</variation>
    <location>
        <position position="43"/>
    </location>
</feature>